<accession>Q9H156</accession>
<accession>A8K117</accession>
<accession>Q2KHN3</accession>
<accession>Q5JXB1</accession>
<accession>Q8NBC7</accession>
<accession>Q96JH3</accession>
<proteinExistence type="evidence at protein level"/>
<protein>
    <recommendedName>
        <fullName>SLIT and NTRK-like protein 2</fullName>
    </recommendedName>
</protein>
<sequence>MLSGVWFLSVLTVAGILQTESRKTAKDICKIRCLCEEKENVLNINCENKGFTTVSLLQPPQYRIYQLFLNGNLLTRLYPNEFVNYSNAVTLHLGNNGLQEIRTGAFSGLKTLKRLHLNNNKLEILREDTFLGLESLEYLQADYNYISAIEAGAFSKLNKLKVLILNDNLLLSLPSNVFRFVLLTHLDLRGNRLKVMPFAGVLEHIGGIMEIQLEENPWNCTCDLLPLKAWLDTITVFVGEIVCETPFRLHGKDVTQLTRQDLCPRKSASDSSQRGSHADTHVQRLSPTMNPALNPTRAPKASRPPKMRNRPTPRVTVSKDRQSFGPIMVYQTKSPVPLTCPSSCVCTSQSSDNGLNVNCQERKFTNISDLQPKPTSPKKLYLTGNYLQTVYKNDLLEYSSLDLLHLGNNRIAVIQEGAFTNLTSLRRLYLNGNYLEVLYPSMFDGLQSLQYLYLEYNVIKEIKPLTFDALINLQLLFLNNNLLRSLPDNIFGGTALTRLNLRNNHFSHLPVKGVLDQLPAFIQIDLQENPWDCTCDIMGLKDWTEHANSPVIINEVTCESPAKHAGEILKFLGREAICPDSPNLSDGTVLSMNHNTDTPRSLSVSPSSYPELHTEVPLSVLILGLLVVFILSVCFGAGLFVFVLKRRKGVPSVPRNTNNLDVSSFQLQYGSYNTETHDKTDGHVYNYIPPPVGQMCQNPIYMQKEGDPVAYYRNLQEFSYSNLEEKKEEPATPAYTISATELLEKQATPREPELLYQNIAERVKELPSAGLVHYNFCTLPKRQFAPSYESRRQNQDRINKTVLYGTPRKCFVGQSKPNHPLLQAKPQSEPDYLEVLEKQTAISQL</sequence>
<dbReference type="EMBL" id="Y19205">
    <property type="protein sequence ID" value="CAC80724.1"/>
    <property type="molecule type" value="Genomic_DNA"/>
</dbReference>
<dbReference type="EMBL" id="AY358828">
    <property type="protein sequence ID" value="AAQ89187.1"/>
    <property type="molecule type" value="mRNA"/>
</dbReference>
<dbReference type="EMBL" id="AK091015">
    <property type="protein sequence ID" value="BAC03566.1"/>
    <property type="molecule type" value="mRNA"/>
</dbReference>
<dbReference type="EMBL" id="AK289732">
    <property type="protein sequence ID" value="BAF82421.1"/>
    <property type="molecule type" value="mRNA"/>
</dbReference>
<dbReference type="EMBL" id="AL109653">
    <property type="protein sequence ID" value="CAI41645.1"/>
    <property type="molecule type" value="Genomic_DNA"/>
</dbReference>
<dbReference type="EMBL" id="AL109653">
    <property type="protein sequence ID" value="CAC18888.1"/>
    <property type="molecule type" value="Genomic_DNA"/>
</dbReference>
<dbReference type="EMBL" id="BC113011">
    <property type="protein sequence ID" value="AAI13012.1"/>
    <property type="molecule type" value="mRNA"/>
</dbReference>
<dbReference type="EMBL" id="BC113012">
    <property type="protein sequence ID" value="AAI13013.1"/>
    <property type="molecule type" value="mRNA"/>
</dbReference>
<dbReference type="EMBL" id="AB058757">
    <property type="protein sequence ID" value="BAB47483.1"/>
    <property type="status" value="ALT_INIT"/>
    <property type="molecule type" value="mRNA"/>
</dbReference>
<dbReference type="CCDS" id="CCDS14680.1">
    <molecule id="Q9H156-1"/>
</dbReference>
<dbReference type="RefSeq" id="NP_001137475.1">
    <molecule id="Q9H156-1"/>
    <property type="nucleotide sequence ID" value="NM_001144003.3"/>
</dbReference>
<dbReference type="RefSeq" id="NP_001137476.1">
    <molecule id="Q9H156-1"/>
    <property type="nucleotide sequence ID" value="NM_001144004.3"/>
</dbReference>
<dbReference type="RefSeq" id="NP_001137477.1">
    <molecule id="Q9H156-1"/>
    <property type="nucleotide sequence ID" value="NM_001144005.3"/>
</dbReference>
<dbReference type="RefSeq" id="NP_001137478.1">
    <molecule id="Q9H156-1"/>
    <property type="nucleotide sequence ID" value="NM_001144006.2"/>
</dbReference>
<dbReference type="RefSeq" id="NP_001137480.1">
    <molecule id="Q9H156-1"/>
    <property type="nucleotide sequence ID" value="NM_001144008.2"/>
</dbReference>
<dbReference type="RefSeq" id="NP_001137481.1">
    <molecule id="Q9H156-1"/>
    <property type="nucleotide sequence ID" value="NM_001144009.2"/>
</dbReference>
<dbReference type="RefSeq" id="NP_001137482.1">
    <molecule id="Q9H156-1"/>
    <property type="nucleotide sequence ID" value="NM_001144010.2"/>
</dbReference>
<dbReference type="RefSeq" id="NP_115928.1">
    <molecule id="Q9H156-1"/>
    <property type="nucleotide sequence ID" value="NM_032539.5"/>
</dbReference>
<dbReference type="RefSeq" id="XP_005262399.1">
    <molecule id="Q9H156-1"/>
    <property type="nucleotide sequence ID" value="XM_005262342.4"/>
</dbReference>
<dbReference type="RefSeq" id="XP_005262400.1">
    <molecule id="Q9H156-1"/>
    <property type="nucleotide sequence ID" value="XM_005262343.4"/>
</dbReference>
<dbReference type="RefSeq" id="XP_005262401.1">
    <molecule id="Q9H156-1"/>
    <property type="nucleotide sequence ID" value="XM_005262344.4"/>
</dbReference>
<dbReference type="RefSeq" id="XP_005262402.1">
    <molecule id="Q9H156-1"/>
    <property type="nucleotide sequence ID" value="XM_005262345.4"/>
</dbReference>
<dbReference type="RefSeq" id="XP_047298533.1">
    <molecule id="Q9H156-1"/>
    <property type="nucleotide sequence ID" value="XM_047442577.1"/>
</dbReference>
<dbReference type="RefSeq" id="XP_047298534.1">
    <molecule id="Q9H156-1"/>
    <property type="nucleotide sequence ID" value="XM_047442578.1"/>
</dbReference>
<dbReference type="RefSeq" id="XP_054183960.1">
    <molecule id="Q9H156-1"/>
    <property type="nucleotide sequence ID" value="XM_054327985.1"/>
</dbReference>
<dbReference type="RefSeq" id="XP_054183961.1">
    <molecule id="Q9H156-1"/>
    <property type="nucleotide sequence ID" value="XM_054327986.1"/>
</dbReference>
<dbReference type="RefSeq" id="XP_054183962.1">
    <molecule id="Q9H156-1"/>
    <property type="nucleotide sequence ID" value="XM_054327987.1"/>
</dbReference>
<dbReference type="RefSeq" id="XP_054183963.1">
    <molecule id="Q9H156-1"/>
    <property type="nucleotide sequence ID" value="XM_054327988.1"/>
</dbReference>
<dbReference type="RefSeq" id="XP_054183964.1">
    <molecule id="Q9H156-1"/>
    <property type="nucleotide sequence ID" value="XM_054327989.1"/>
</dbReference>
<dbReference type="RefSeq" id="XP_054183965.1">
    <molecule id="Q9H156-1"/>
    <property type="nucleotide sequence ID" value="XM_054327990.1"/>
</dbReference>
<dbReference type="SMR" id="Q9H156"/>
<dbReference type="BioGRID" id="124160">
    <property type="interactions" value="2"/>
</dbReference>
<dbReference type="FunCoup" id="Q9H156">
    <property type="interactions" value="191"/>
</dbReference>
<dbReference type="STRING" id="9606.ENSP00000334374"/>
<dbReference type="GlyCosmos" id="Q9H156">
    <property type="glycosylation" value="4 sites, 1 glycan"/>
</dbReference>
<dbReference type="GlyGen" id="Q9H156">
    <property type="glycosylation" value="6 sites, 1 N-linked glycan (1 site), 1 O-linked glycan (2 sites)"/>
</dbReference>
<dbReference type="iPTMnet" id="Q9H156"/>
<dbReference type="PhosphoSitePlus" id="Q9H156"/>
<dbReference type="BioMuta" id="SLITRK2"/>
<dbReference type="DMDM" id="46397026"/>
<dbReference type="MassIVE" id="Q9H156"/>
<dbReference type="PaxDb" id="9606-ENSP00000359521"/>
<dbReference type="PeptideAtlas" id="Q9H156"/>
<dbReference type="ProteomicsDB" id="80355">
    <molecule id="Q9H156-1"/>
</dbReference>
<dbReference type="ProteomicsDB" id="80356">
    <molecule id="Q9H156-2"/>
</dbReference>
<dbReference type="Antibodypedia" id="30574">
    <property type="antibodies" value="149 antibodies from 27 providers"/>
</dbReference>
<dbReference type="DNASU" id="84631"/>
<dbReference type="Ensembl" id="ENST00000335565.6">
    <molecule id="Q9H156-1"/>
    <property type="protein sequence ID" value="ENSP00000334374.5"/>
    <property type="gene ID" value="ENSG00000185985.11"/>
</dbReference>
<dbReference type="Ensembl" id="ENST00000370490.1">
    <molecule id="Q9H156-1"/>
    <property type="protein sequence ID" value="ENSP00000359521.1"/>
    <property type="gene ID" value="ENSG00000185985.11"/>
</dbReference>
<dbReference type="GeneID" id="84631"/>
<dbReference type="KEGG" id="hsa:84631"/>
<dbReference type="MANE-Select" id="ENST00000335565.6">
    <property type="protein sequence ID" value="ENSP00000334374.5"/>
    <property type="RefSeq nucleotide sequence ID" value="NM_032539.5"/>
    <property type="RefSeq protein sequence ID" value="NP_115928.1"/>
</dbReference>
<dbReference type="UCSC" id="uc033eyj.2">
    <molecule id="Q9H156-1"/>
    <property type="organism name" value="human"/>
</dbReference>
<dbReference type="AGR" id="HGNC:13449"/>
<dbReference type="CTD" id="84631"/>
<dbReference type="DisGeNET" id="84631"/>
<dbReference type="GeneCards" id="SLITRK2"/>
<dbReference type="HGNC" id="HGNC:13449">
    <property type="gene designation" value="SLITRK2"/>
</dbReference>
<dbReference type="HPA" id="ENSG00000185985">
    <property type="expression patterns" value="Tissue enhanced (brain, retina)"/>
</dbReference>
<dbReference type="MalaCards" id="SLITRK2"/>
<dbReference type="MIM" id="300561">
    <property type="type" value="gene"/>
</dbReference>
<dbReference type="MIM" id="301107">
    <property type="type" value="phenotype"/>
</dbReference>
<dbReference type="neXtProt" id="NX_Q9H156"/>
<dbReference type="OpenTargets" id="ENSG00000185985"/>
<dbReference type="PharmGKB" id="PA134968225"/>
<dbReference type="VEuPathDB" id="HostDB:ENSG00000185985"/>
<dbReference type="eggNOG" id="ENOG502QR6C">
    <property type="taxonomic scope" value="Eukaryota"/>
</dbReference>
<dbReference type="GeneTree" id="ENSGT00940000161248"/>
<dbReference type="InParanoid" id="Q9H156"/>
<dbReference type="OMA" id="DICKTRC"/>
<dbReference type="OrthoDB" id="9439679at2759"/>
<dbReference type="PAN-GO" id="Q9H156">
    <property type="GO annotations" value="3 GO annotations based on evolutionary models"/>
</dbReference>
<dbReference type="PhylomeDB" id="Q9H156"/>
<dbReference type="TreeFam" id="TF351826"/>
<dbReference type="PathwayCommons" id="Q9H156"/>
<dbReference type="Reactome" id="R-HSA-388844">
    <property type="pathway name" value="Receptor-type tyrosine-protein phosphatases"/>
</dbReference>
<dbReference type="BioGRID-ORCS" id="84631">
    <property type="hits" value="12 hits in 773 CRISPR screens"/>
</dbReference>
<dbReference type="ChiTaRS" id="SLITRK2">
    <property type="organism name" value="human"/>
</dbReference>
<dbReference type="GeneWiki" id="SLITRK2"/>
<dbReference type="GenomeRNAi" id="84631"/>
<dbReference type="Pharos" id="Q9H156">
    <property type="development level" value="Tbio"/>
</dbReference>
<dbReference type="PRO" id="PR:Q9H156"/>
<dbReference type="Proteomes" id="UP000005640">
    <property type="component" value="Chromosome X"/>
</dbReference>
<dbReference type="RNAct" id="Q9H156">
    <property type="molecule type" value="protein"/>
</dbReference>
<dbReference type="Bgee" id="ENSG00000185985">
    <property type="expression patterns" value="Expressed in ventricular zone and 124 other cell types or tissues"/>
</dbReference>
<dbReference type="ExpressionAtlas" id="Q9H156">
    <property type="expression patterns" value="baseline and differential"/>
</dbReference>
<dbReference type="GO" id="GO:0030425">
    <property type="term" value="C:dendrite"/>
    <property type="evidence" value="ECO:0000314"/>
    <property type="project" value="UniProtKB"/>
</dbReference>
<dbReference type="GO" id="GO:0098982">
    <property type="term" value="C:GABA-ergic synapse"/>
    <property type="evidence" value="ECO:0000314"/>
    <property type="project" value="SynGO"/>
</dbReference>
<dbReference type="GO" id="GO:0098978">
    <property type="term" value="C:glutamatergic synapse"/>
    <property type="evidence" value="ECO:0000314"/>
    <property type="project" value="SynGO"/>
</dbReference>
<dbReference type="GO" id="GO:0005886">
    <property type="term" value="C:plasma membrane"/>
    <property type="evidence" value="ECO:0000315"/>
    <property type="project" value="UniProtKB"/>
</dbReference>
<dbReference type="GO" id="GO:0045211">
    <property type="term" value="C:postsynaptic membrane"/>
    <property type="evidence" value="ECO:0007669"/>
    <property type="project" value="Ensembl"/>
</dbReference>
<dbReference type="GO" id="GO:0007409">
    <property type="term" value="P:axonogenesis"/>
    <property type="evidence" value="ECO:0000315"/>
    <property type="project" value="UniProtKB"/>
</dbReference>
<dbReference type="GO" id="GO:0051965">
    <property type="term" value="P:positive regulation of synapse assembly"/>
    <property type="evidence" value="ECO:0000250"/>
    <property type="project" value="UniProtKB"/>
</dbReference>
<dbReference type="GO" id="GO:1905606">
    <property type="term" value="P:regulation of presynapse assembly"/>
    <property type="evidence" value="ECO:0000314"/>
    <property type="project" value="SynGO"/>
</dbReference>
<dbReference type="GO" id="GO:0050807">
    <property type="term" value="P:regulation of synapse organization"/>
    <property type="evidence" value="ECO:0000314"/>
    <property type="project" value="SynGO"/>
</dbReference>
<dbReference type="GO" id="GO:0099560">
    <property type="term" value="P:synaptic membrane adhesion"/>
    <property type="evidence" value="ECO:0000314"/>
    <property type="project" value="SynGO"/>
</dbReference>
<dbReference type="FunFam" id="3.80.10.10:FF:000001">
    <property type="entry name" value="SLIT and NTRK-like family, member 1"/>
    <property type="match status" value="2"/>
</dbReference>
<dbReference type="Gene3D" id="3.80.10.10">
    <property type="entry name" value="Ribonuclease Inhibitor"/>
    <property type="match status" value="2"/>
</dbReference>
<dbReference type="InterPro" id="IPR000483">
    <property type="entry name" value="Cys-rich_flank_reg_C"/>
</dbReference>
<dbReference type="InterPro" id="IPR001611">
    <property type="entry name" value="Leu-rich_rpt"/>
</dbReference>
<dbReference type="InterPro" id="IPR003591">
    <property type="entry name" value="Leu-rich_rpt_typical-subtyp"/>
</dbReference>
<dbReference type="InterPro" id="IPR032675">
    <property type="entry name" value="LRR_dom_sf"/>
</dbReference>
<dbReference type="InterPro" id="IPR000372">
    <property type="entry name" value="LRRNT"/>
</dbReference>
<dbReference type="PANTHER" id="PTHR45773:SF4">
    <property type="entry name" value="SLIT AND NTRK-LIKE PROTEIN 2"/>
    <property type="match status" value="1"/>
</dbReference>
<dbReference type="PANTHER" id="PTHR45773">
    <property type="entry name" value="SLIT AND NTRK-LIKE PROTEIN 4-RELATED"/>
    <property type="match status" value="1"/>
</dbReference>
<dbReference type="Pfam" id="PF13855">
    <property type="entry name" value="LRR_8"/>
    <property type="match status" value="2"/>
</dbReference>
<dbReference type="SMART" id="SM00369">
    <property type="entry name" value="LRR_TYP"/>
    <property type="match status" value="10"/>
</dbReference>
<dbReference type="SMART" id="SM00082">
    <property type="entry name" value="LRRCT"/>
    <property type="match status" value="2"/>
</dbReference>
<dbReference type="SMART" id="SM00013">
    <property type="entry name" value="LRRNT"/>
    <property type="match status" value="2"/>
</dbReference>
<dbReference type="SUPFAM" id="SSF52058">
    <property type="entry name" value="L domain-like"/>
    <property type="match status" value="2"/>
</dbReference>
<dbReference type="PROSITE" id="PS51450">
    <property type="entry name" value="LRR"/>
    <property type="match status" value="12"/>
</dbReference>
<keyword id="KW-0025">Alternative splicing</keyword>
<keyword id="KW-1003">Cell membrane</keyword>
<keyword id="KW-0966">Cell projection</keyword>
<keyword id="KW-0225">Disease variant</keyword>
<keyword id="KW-1015">Disulfide bond</keyword>
<keyword id="KW-0325">Glycoprotein</keyword>
<keyword id="KW-0991">Intellectual disability</keyword>
<keyword id="KW-0433">Leucine-rich repeat</keyword>
<keyword id="KW-0472">Membrane</keyword>
<keyword id="KW-0597">Phosphoprotein</keyword>
<keyword id="KW-1267">Proteomics identification</keyword>
<keyword id="KW-1185">Reference proteome</keyword>
<keyword id="KW-0677">Repeat</keyword>
<keyword id="KW-0732">Signal</keyword>
<keyword id="KW-0812">Transmembrane</keyword>
<keyword id="KW-1133">Transmembrane helix</keyword>
<organism evidence="13">
    <name type="scientific">Homo sapiens</name>
    <name type="common">Human</name>
    <dbReference type="NCBI Taxonomy" id="9606"/>
    <lineage>
        <taxon>Eukaryota</taxon>
        <taxon>Metazoa</taxon>
        <taxon>Chordata</taxon>
        <taxon>Craniata</taxon>
        <taxon>Vertebrata</taxon>
        <taxon>Euteleostomi</taxon>
        <taxon>Mammalia</taxon>
        <taxon>Eutheria</taxon>
        <taxon>Euarchontoglires</taxon>
        <taxon>Primates</taxon>
        <taxon>Haplorrhini</taxon>
        <taxon>Catarrhini</taxon>
        <taxon>Hominidae</taxon>
        <taxon>Homo</taxon>
    </lineage>
</organism>
<reference evidence="10 13" key="1">
    <citation type="submission" date="1999-09" db="EMBL/GenBank/DDBJ databases">
        <title>The structural characterization of the new gene SLITL1 reveals the presence of an other novel gene embedded within SLITL1 first intron.</title>
        <authorList>
            <person name="Redolfi E."/>
            <person name="Susani L."/>
            <person name="Mumm S."/>
            <person name="Stephan A."/>
            <person name="Reinbold R.A."/>
            <person name="Labella T."/>
            <person name="Trent J.M."/>
            <person name="Vezzoni P."/>
            <person name="Zucchi T."/>
        </authorList>
    </citation>
    <scope>NUCLEOTIDE SEQUENCE [GENOMIC DNA] (ISOFORM 1)</scope>
</reference>
<reference evidence="10" key="2">
    <citation type="journal article" date="2003" name="Genome Res.">
        <title>The secreted protein discovery initiative (SPDI), a large-scale effort to identify novel human secreted and transmembrane proteins: a bioinformatics assessment.</title>
        <authorList>
            <person name="Clark H.F."/>
            <person name="Gurney A.L."/>
            <person name="Abaya E."/>
            <person name="Baker K."/>
            <person name="Baldwin D.T."/>
            <person name="Brush J."/>
            <person name="Chen J."/>
            <person name="Chow B."/>
            <person name="Chui C."/>
            <person name="Crowley C."/>
            <person name="Currell B."/>
            <person name="Deuel B."/>
            <person name="Dowd P."/>
            <person name="Eaton D."/>
            <person name="Foster J.S."/>
            <person name="Grimaldi C."/>
            <person name="Gu Q."/>
            <person name="Hass P.E."/>
            <person name="Heldens S."/>
            <person name="Huang A."/>
            <person name="Kim H.S."/>
            <person name="Klimowski L."/>
            <person name="Jin Y."/>
            <person name="Johnson S."/>
            <person name="Lee J."/>
            <person name="Lewis L."/>
            <person name="Liao D."/>
            <person name="Mark M.R."/>
            <person name="Robbie E."/>
            <person name="Sanchez C."/>
            <person name="Schoenfeld J."/>
            <person name="Seshagiri S."/>
            <person name="Simmons L."/>
            <person name="Singh J."/>
            <person name="Smith V."/>
            <person name="Stinson J."/>
            <person name="Vagts A."/>
            <person name="Vandlen R.L."/>
            <person name="Watanabe C."/>
            <person name="Wieand D."/>
            <person name="Woods K."/>
            <person name="Xie M.-H."/>
            <person name="Yansura D.G."/>
            <person name="Yi S."/>
            <person name="Yu G."/>
            <person name="Yuan J."/>
            <person name="Zhang M."/>
            <person name="Zhang Z."/>
            <person name="Goddard A.D."/>
            <person name="Wood W.I."/>
            <person name="Godowski P.J."/>
            <person name="Gray A.M."/>
        </authorList>
    </citation>
    <scope>NUCLEOTIDE SEQUENCE [LARGE SCALE MRNA] (ISOFORM 2)</scope>
</reference>
<reference evidence="10" key="3">
    <citation type="journal article" date="2004" name="Nat. Genet.">
        <title>Complete sequencing and characterization of 21,243 full-length human cDNAs.</title>
        <authorList>
            <person name="Ota T."/>
            <person name="Suzuki Y."/>
            <person name="Nishikawa T."/>
            <person name="Otsuki T."/>
            <person name="Sugiyama T."/>
            <person name="Irie R."/>
            <person name="Wakamatsu A."/>
            <person name="Hayashi K."/>
            <person name="Sato H."/>
            <person name="Nagai K."/>
            <person name="Kimura K."/>
            <person name="Makita H."/>
            <person name="Sekine M."/>
            <person name="Obayashi M."/>
            <person name="Nishi T."/>
            <person name="Shibahara T."/>
            <person name="Tanaka T."/>
            <person name="Ishii S."/>
            <person name="Yamamoto J."/>
            <person name="Saito K."/>
            <person name="Kawai Y."/>
            <person name="Isono Y."/>
            <person name="Nakamura Y."/>
            <person name="Nagahari K."/>
            <person name="Murakami K."/>
            <person name="Yasuda T."/>
            <person name="Iwayanagi T."/>
            <person name="Wagatsuma M."/>
            <person name="Shiratori A."/>
            <person name="Sudo H."/>
            <person name="Hosoiri T."/>
            <person name="Kaku Y."/>
            <person name="Kodaira H."/>
            <person name="Kondo H."/>
            <person name="Sugawara M."/>
            <person name="Takahashi M."/>
            <person name="Kanda K."/>
            <person name="Yokoi T."/>
            <person name="Furuya T."/>
            <person name="Kikkawa E."/>
            <person name="Omura Y."/>
            <person name="Abe K."/>
            <person name="Kamihara K."/>
            <person name="Katsuta N."/>
            <person name="Sato K."/>
            <person name="Tanikawa M."/>
            <person name="Yamazaki M."/>
            <person name="Ninomiya K."/>
            <person name="Ishibashi T."/>
            <person name="Yamashita H."/>
            <person name="Murakawa K."/>
            <person name="Fujimori K."/>
            <person name="Tanai H."/>
            <person name="Kimata M."/>
            <person name="Watanabe M."/>
            <person name="Hiraoka S."/>
            <person name="Chiba Y."/>
            <person name="Ishida S."/>
            <person name="Ono Y."/>
            <person name="Takiguchi S."/>
            <person name="Watanabe S."/>
            <person name="Yosida M."/>
            <person name="Hotuta T."/>
            <person name="Kusano J."/>
            <person name="Kanehori K."/>
            <person name="Takahashi-Fujii A."/>
            <person name="Hara H."/>
            <person name="Tanase T.-O."/>
            <person name="Nomura Y."/>
            <person name="Togiya S."/>
            <person name="Komai F."/>
            <person name="Hara R."/>
            <person name="Takeuchi K."/>
            <person name="Arita M."/>
            <person name="Imose N."/>
            <person name="Musashino K."/>
            <person name="Yuuki H."/>
            <person name="Oshima A."/>
            <person name="Sasaki N."/>
            <person name="Aotsuka S."/>
            <person name="Yoshikawa Y."/>
            <person name="Matsunawa H."/>
            <person name="Ichihara T."/>
            <person name="Shiohata N."/>
            <person name="Sano S."/>
            <person name="Moriya S."/>
            <person name="Momiyama H."/>
            <person name="Satoh N."/>
            <person name="Takami S."/>
            <person name="Terashima Y."/>
            <person name="Suzuki O."/>
            <person name="Nakagawa S."/>
            <person name="Senoh A."/>
            <person name="Mizoguchi H."/>
            <person name="Goto Y."/>
            <person name="Shimizu F."/>
            <person name="Wakebe H."/>
            <person name="Hishigaki H."/>
            <person name="Watanabe T."/>
            <person name="Sugiyama A."/>
            <person name="Takemoto M."/>
            <person name="Kawakami B."/>
            <person name="Yamazaki M."/>
            <person name="Watanabe K."/>
            <person name="Kumagai A."/>
            <person name="Itakura S."/>
            <person name="Fukuzumi Y."/>
            <person name="Fujimori Y."/>
            <person name="Komiyama M."/>
            <person name="Tashiro H."/>
            <person name="Tanigami A."/>
            <person name="Fujiwara T."/>
            <person name="Ono T."/>
            <person name="Yamada K."/>
            <person name="Fujii Y."/>
            <person name="Ozaki K."/>
            <person name="Hirao M."/>
            <person name="Ohmori Y."/>
            <person name="Kawabata A."/>
            <person name="Hikiji T."/>
            <person name="Kobatake N."/>
            <person name="Inagaki H."/>
            <person name="Ikema Y."/>
            <person name="Okamoto S."/>
            <person name="Okitani R."/>
            <person name="Kawakami T."/>
            <person name="Noguchi S."/>
            <person name="Itoh T."/>
            <person name="Shigeta K."/>
            <person name="Senba T."/>
            <person name="Matsumura K."/>
            <person name="Nakajima Y."/>
            <person name="Mizuno T."/>
            <person name="Morinaga M."/>
            <person name="Sasaki M."/>
            <person name="Togashi T."/>
            <person name="Oyama M."/>
            <person name="Hata H."/>
            <person name="Watanabe M."/>
            <person name="Komatsu T."/>
            <person name="Mizushima-Sugano J."/>
            <person name="Satoh T."/>
            <person name="Shirai Y."/>
            <person name="Takahashi Y."/>
            <person name="Nakagawa K."/>
            <person name="Okumura K."/>
            <person name="Nagase T."/>
            <person name="Nomura N."/>
            <person name="Kikuchi H."/>
            <person name="Masuho Y."/>
            <person name="Yamashita R."/>
            <person name="Nakai K."/>
            <person name="Yada T."/>
            <person name="Nakamura Y."/>
            <person name="Ohara O."/>
            <person name="Isogai T."/>
            <person name="Sugano S."/>
        </authorList>
    </citation>
    <scope>NUCLEOTIDE SEQUENCE [LARGE SCALE MRNA] (ISOFORM 1)</scope>
    <source>
        <tissue evidence="12">Brain</tissue>
    </source>
</reference>
<reference key="4">
    <citation type="journal article" date="2005" name="Nature">
        <title>The DNA sequence of the human X chromosome.</title>
        <authorList>
            <person name="Ross M.T."/>
            <person name="Grafham D.V."/>
            <person name="Coffey A.J."/>
            <person name="Scherer S."/>
            <person name="McLay K."/>
            <person name="Muzny D."/>
            <person name="Platzer M."/>
            <person name="Howell G.R."/>
            <person name="Burrows C."/>
            <person name="Bird C.P."/>
            <person name="Frankish A."/>
            <person name="Lovell F.L."/>
            <person name="Howe K.L."/>
            <person name="Ashurst J.L."/>
            <person name="Fulton R.S."/>
            <person name="Sudbrak R."/>
            <person name="Wen G."/>
            <person name="Jones M.C."/>
            <person name="Hurles M.E."/>
            <person name="Andrews T.D."/>
            <person name="Scott C.E."/>
            <person name="Searle S."/>
            <person name="Ramser J."/>
            <person name="Whittaker A."/>
            <person name="Deadman R."/>
            <person name="Carter N.P."/>
            <person name="Hunt S.E."/>
            <person name="Chen R."/>
            <person name="Cree A."/>
            <person name="Gunaratne P."/>
            <person name="Havlak P."/>
            <person name="Hodgson A."/>
            <person name="Metzker M.L."/>
            <person name="Richards S."/>
            <person name="Scott G."/>
            <person name="Steffen D."/>
            <person name="Sodergren E."/>
            <person name="Wheeler D.A."/>
            <person name="Worley K.C."/>
            <person name="Ainscough R."/>
            <person name="Ambrose K.D."/>
            <person name="Ansari-Lari M.A."/>
            <person name="Aradhya S."/>
            <person name="Ashwell R.I."/>
            <person name="Babbage A.K."/>
            <person name="Bagguley C.L."/>
            <person name="Ballabio A."/>
            <person name="Banerjee R."/>
            <person name="Barker G.E."/>
            <person name="Barlow K.F."/>
            <person name="Barrett I.P."/>
            <person name="Bates K.N."/>
            <person name="Beare D.M."/>
            <person name="Beasley H."/>
            <person name="Beasley O."/>
            <person name="Beck A."/>
            <person name="Bethel G."/>
            <person name="Blechschmidt K."/>
            <person name="Brady N."/>
            <person name="Bray-Allen S."/>
            <person name="Bridgeman A.M."/>
            <person name="Brown A.J."/>
            <person name="Brown M.J."/>
            <person name="Bonnin D."/>
            <person name="Bruford E.A."/>
            <person name="Buhay C."/>
            <person name="Burch P."/>
            <person name="Burford D."/>
            <person name="Burgess J."/>
            <person name="Burrill W."/>
            <person name="Burton J."/>
            <person name="Bye J.M."/>
            <person name="Carder C."/>
            <person name="Carrel L."/>
            <person name="Chako J."/>
            <person name="Chapman J.C."/>
            <person name="Chavez D."/>
            <person name="Chen E."/>
            <person name="Chen G."/>
            <person name="Chen Y."/>
            <person name="Chen Z."/>
            <person name="Chinault C."/>
            <person name="Ciccodicola A."/>
            <person name="Clark S.Y."/>
            <person name="Clarke G."/>
            <person name="Clee C.M."/>
            <person name="Clegg S."/>
            <person name="Clerc-Blankenburg K."/>
            <person name="Clifford K."/>
            <person name="Cobley V."/>
            <person name="Cole C.G."/>
            <person name="Conquer J.S."/>
            <person name="Corby N."/>
            <person name="Connor R.E."/>
            <person name="David R."/>
            <person name="Davies J."/>
            <person name="Davis C."/>
            <person name="Davis J."/>
            <person name="Delgado O."/>
            <person name="Deshazo D."/>
            <person name="Dhami P."/>
            <person name="Ding Y."/>
            <person name="Dinh H."/>
            <person name="Dodsworth S."/>
            <person name="Draper H."/>
            <person name="Dugan-Rocha S."/>
            <person name="Dunham A."/>
            <person name="Dunn M."/>
            <person name="Durbin K.J."/>
            <person name="Dutta I."/>
            <person name="Eades T."/>
            <person name="Ellwood M."/>
            <person name="Emery-Cohen A."/>
            <person name="Errington H."/>
            <person name="Evans K.L."/>
            <person name="Faulkner L."/>
            <person name="Francis F."/>
            <person name="Frankland J."/>
            <person name="Fraser A.E."/>
            <person name="Galgoczy P."/>
            <person name="Gilbert J."/>
            <person name="Gill R."/>
            <person name="Gloeckner G."/>
            <person name="Gregory S.G."/>
            <person name="Gribble S."/>
            <person name="Griffiths C."/>
            <person name="Grocock R."/>
            <person name="Gu Y."/>
            <person name="Gwilliam R."/>
            <person name="Hamilton C."/>
            <person name="Hart E.A."/>
            <person name="Hawes A."/>
            <person name="Heath P.D."/>
            <person name="Heitmann K."/>
            <person name="Hennig S."/>
            <person name="Hernandez J."/>
            <person name="Hinzmann B."/>
            <person name="Ho S."/>
            <person name="Hoffs M."/>
            <person name="Howden P.J."/>
            <person name="Huckle E.J."/>
            <person name="Hume J."/>
            <person name="Hunt P.J."/>
            <person name="Hunt A.R."/>
            <person name="Isherwood J."/>
            <person name="Jacob L."/>
            <person name="Johnson D."/>
            <person name="Jones S."/>
            <person name="de Jong P.J."/>
            <person name="Joseph S.S."/>
            <person name="Keenan S."/>
            <person name="Kelly S."/>
            <person name="Kershaw J.K."/>
            <person name="Khan Z."/>
            <person name="Kioschis P."/>
            <person name="Klages S."/>
            <person name="Knights A.J."/>
            <person name="Kosiura A."/>
            <person name="Kovar-Smith C."/>
            <person name="Laird G.K."/>
            <person name="Langford C."/>
            <person name="Lawlor S."/>
            <person name="Leversha M."/>
            <person name="Lewis L."/>
            <person name="Liu W."/>
            <person name="Lloyd C."/>
            <person name="Lloyd D.M."/>
            <person name="Loulseged H."/>
            <person name="Loveland J.E."/>
            <person name="Lovell J.D."/>
            <person name="Lozado R."/>
            <person name="Lu J."/>
            <person name="Lyne R."/>
            <person name="Ma J."/>
            <person name="Maheshwari M."/>
            <person name="Matthews L.H."/>
            <person name="McDowall J."/>
            <person name="McLaren S."/>
            <person name="McMurray A."/>
            <person name="Meidl P."/>
            <person name="Meitinger T."/>
            <person name="Milne S."/>
            <person name="Miner G."/>
            <person name="Mistry S.L."/>
            <person name="Morgan M."/>
            <person name="Morris S."/>
            <person name="Mueller I."/>
            <person name="Mullikin J.C."/>
            <person name="Nguyen N."/>
            <person name="Nordsiek G."/>
            <person name="Nyakatura G."/>
            <person name="O'dell C.N."/>
            <person name="Okwuonu G."/>
            <person name="Palmer S."/>
            <person name="Pandian R."/>
            <person name="Parker D."/>
            <person name="Parrish J."/>
            <person name="Pasternak S."/>
            <person name="Patel D."/>
            <person name="Pearce A.V."/>
            <person name="Pearson D.M."/>
            <person name="Pelan S.E."/>
            <person name="Perez L."/>
            <person name="Porter K.M."/>
            <person name="Ramsey Y."/>
            <person name="Reichwald K."/>
            <person name="Rhodes S."/>
            <person name="Ridler K.A."/>
            <person name="Schlessinger D."/>
            <person name="Schueler M.G."/>
            <person name="Sehra H.K."/>
            <person name="Shaw-Smith C."/>
            <person name="Shen H."/>
            <person name="Sheridan E.M."/>
            <person name="Shownkeen R."/>
            <person name="Skuce C.D."/>
            <person name="Smith M.L."/>
            <person name="Sotheran E.C."/>
            <person name="Steingruber H.E."/>
            <person name="Steward C.A."/>
            <person name="Storey R."/>
            <person name="Swann R.M."/>
            <person name="Swarbreck D."/>
            <person name="Tabor P.E."/>
            <person name="Taudien S."/>
            <person name="Taylor T."/>
            <person name="Teague B."/>
            <person name="Thomas K."/>
            <person name="Thorpe A."/>
            <person name="Timms K."/>
            <person name="Tracey A."/>
            <person name="Trevanion S."/>
            <person name="Tromans A.C."/>
            <person name="d'Urso M."/>
            <person name="Verduzco D."/>
            <person name="Villasana D."/>
            <person name="Waldron L."/>
            <person name="Wall M."/>
            <person name="Wang Q."/>
            <person name="Warren J."/>
            <person name="Warry G.L."/>
            <person name="Wei X."/>
            <person name="West A."/>
            <person name="Whitehead S.L."/>
            <person name="Whiteley M.N."/>
            <person name="Wilkinson J.E."/>
            <person name="Willey D.L."/>
            <person name="Williams G."/>
            <person name="Williams L."/>
            <person name="Williamson A."/>
            <person name="Williamson H."/>
            <person name="Wilming L."/>
            <person name="Woodmansey R.L."/>
            <person name="Wray P.W."/>
            <person name="Yen J."/>
            <person name="Zhang J."/>
            <person name="Zhou J."/>
            <person name="Zoghbi H."/>
            <person name="Zorilla S."/>
            <person name="Buck D."/>
            <person name="Reinhardt R."/>
            <person name="Poustka A."/>
            <person name="Rosenthal A."/>
            <person name="Lehrach H."/>
            <person name="Meindl A."/>
            <person name="Minx P.J."/>
            <person name="Hillier L.W."/>
            <person name="Willard H.F."/>
            <person name="Wilson R.K."/>
            <person name="Waterston R.H."/>
            <person name="Rice C.M."/>
            <person name="Vaudin M."/>
            <person name="Coulson A."/>
            <person name="Nelson D.L."/>
            <person name="Weinstock G."/>
            <person name="Sulston J.E."/>
            <person name="Durbin R.M."/>
            <person name="Hubbard T."/>
            <person name="Gibbs R.A."/>
            <person name="Beck S."/>
            <person name="Rogers J."/>
            <person name="Bentley D.R."/>
        </authorList>
    </citation>
    <scope>NUCLEOTIDE SEQUENCE [LARGE SCALE GENOMIC DNA]</scope>
</reference>
<reference key="5">
    <citation type="journal article" date="2004" name="Genome Res.">
        <title>The status, quality, and expansion of the NIH full-length cDNA project: the Mammalian Gene Collection (MGC).</title>
        <authorList>
            <consortium name="The MGC Project Team"/>
        </authorList>
    </citation>
    <scope>NUCLEOTIDE SEQUENCE [LARGE SCALE MRNA] (ISOFORM 1)</scope>
</reference>
<reference evidence="10" key="6">
    <citation type="journal article" date="2001" name="DNA Res.">
        <title>Prediction of the coding sequences of unidentified human genes. XX. The complete sequences of 100 new cDNA clones from brain which code for large proteins in vitro.</title>
        <authorList>
            <person name="Nagase T."/>
            <person name="Nakayama M."/>
            <person name="Nakajima D."/>
            <person name="Kikuno R."/>
            <person name="Ohara O."/>
        </authorList>
    </citation>
    <scope>NUCLEOTIDE SEQUENCE [LARGE SCALE MRNA] OF 1-566</scope>
    <source>
        <tissue evidence="11">Brain</tissue>
    </source>
</reference>
<reference evidence="10" key="7">
    <citation type="journal article" date="2003" name="Gene">
        <title>Human SLITRK family genes: genomic organization and expression profiling in normal brain and brain tumor tissue.</title>
        <authorList>
            <person name="Aruga J."/>
            <person name="Yokota N."/>
            <person name="Mikoshiba K."/>
        </authorList>
    </citation>
    <scope>IDENTIFICATION</scope>
    <scope>TISSUE SPECIFICITY</scope>
    <source>
        <tissue evidence="4">Brain</tissue>
        <tissue evidence="4">Brain tumor</tissue>
    </source>
</reference>
<reference key="8">
    <citation type="journal article" date="2016" name="Front. Mol. Neurosci.">
        <title>Slitrk missense mutations associated with neuropsychiatric disorders distinctively impair Slitrk trafficking and synapse formation.</title>
        <authorList>
            <person name="Kang H."/>
            <person name="Han K.A."/>
            <person name="Won S.Y."/>
            <person name="Kim H.M."/>
            <person name="Lee Y.H."/>
            <person name="Ko J."/>
            <person name="Um J.W."/>
        </authorList>
    </citation>
    <scope>FUNCTION</scope>
    <scope>SUBCELLULAR LOCATION</scope>
    <scope>CHARACTERIZATION OF VARIANTS MET-89; PHE-549 AND PRO-601</scope>
</reference>
<reference key="9">
    <citation type="journal article" date="2016" name="Sci. Rep.">
        <title>Slitrk1 is localized to excitatory synapses and promotes their development.</title>
        <authorList>
            <person name="Beaubien F."/>
            <person name="Raja R."/>
            <person name="Kennedy T.E."/>
            <person name="Fournier A.E."/>
            <person name="Cloutier J.F."/>
        </authorList>
    </citation>
    <scope>FUNCTION</scope>
</reference>
<reference key="10">
    <citation type="journal article" date="2022" name="Nat. Commun.">
        <title>SLITRK2 variants associated with neurodevelopmental disorders impair excitatory synaptic function and cognition in mice.</title>
        <authorList>
            <person name="El Chehadeh S."/>
            <person name="Han K.A."/>
            <person name="Kim D."/>
            <person name="Jang G."/>
            <person name="Bakhtiari S."/>
            <person name="Lim D."/>
            <person name="Kim H.Y."/>
            <person name="Kim J."/>
            <person name="Kim H."/>
            <person name="Wynn J."/>
            <person name="Chung W.K."/>
            <person name="Vitiello G."/>
            <person name="Cutcutache I."/>
            <person name="Page M."/>
            <person name="Gecz J."/>
            <person name="Harper K."/>
            <person name="Han A.R."/>
            <person name="Kim H.M."/>
            <person name="Wessels M."/>
            <person name="Bayat A."/>
            <person name="Jaen A.F."/>
            <person name="Selicorni A."/>
            <person name="Maitz S."/>
            <person name="de Brouwer A.P.M."/>
            <person name="Silfhout A.V."/>
            <person name="Armstrong M."/>
            <person name="Symonds J."/>
            <person name="Kuery S."/>
            <person name="Isidor B."/>
            <person name="Cogne B."/>
            <person name="Nizon M."/>
            <person name="Feger C."/>
            <person name="Muller J."/>
            <person name="Torti E."/>
            <person name="Grange D.K."/>
            <person name="Willems M."/>
            <person name="Kruer M.C."/>
            <person name="Ko J."/>
            <person name="Piton A."/>
            <person name="Um J.W."/>
        </authorList>
    </citation>
    <scope>INVOLVEMENT IN XLID111</scope>
    <scope>VARIANTS XLID111 SER-74; LYS-210; ALA-312; ARG-374; CYS-426; 461-GLU--LEU-845 DEL AND MET-511</scope>
    <scope>CHARACTERIZATION OF VARIANTS XLID111 SER-74; LYS-210; ALA-312; ARG-374; CYS-426; 461-GLU--LEU-845 DEL AND MET-511</scope>
    <scope>VARIANTS ILE-9; GLU-15; ILE-201; ALA-311; GLN-484; ASP-555 AND CYS-792</scope>
    <scope>CHARACTERIZATION OF VARIANTS ILE-9; GLU-15; ILE-201; ALA-311; ASN-323; GLN-484; ASP-555; ILE-589 AND CYS-792</scope>
    <scope>FUNCTION</scope>
    <scope>SUBCELLULAR LOCATION</scope>
    <scope>INTERACTION WITH NTRK2</scope>
</reference>
<reference key="11">
    <citation type="journal article" date="2011" name="Mol. Psychiatry">
        <title>Systematic resequencing of X-chromosome synaptic genes in autism spectrum disorder and schizophrenia.</title>
        <authorList>
            <person name="Piton A."/>
            <person name="Gauthier J."/>
            <person name="Hamdan F.F."/>
            <person name="Lafreniere R.G."/>
            <person name="Yang Y."/>
            <person name="Henrion E."/>
            <person name="Laurent S."/>
            <person name="Noreau A."/>
            <person name="Thibodeau P."/>
            <person name="Karemera L."/>
            <person name="Spiegelman D."/>
            <person name="Kuku F."/>
            <person name="Duguay J."/>
            <person name="Destroismaisons L."/>
            <person name="Jolivet P."/>
            <person name="Cote M."/>
            <person name="Lachapelle K."/>
            <person name="Diallo O."/>
            <person name="Raymond A."/>
            <person name="Marineau C."/>
            <person name="Champagne N."/>
            <person name="Xiong L."/>
            <person name="Gaspar C."/>
            <person name="Riviere J.B."/>
            <person name="Tarabeux J."/>
            <person name="Cossette P."/>
            <person name="Krebs M.O."/>
            <person name="Rapoport J.L."/>
            <person name="Addington A."/>
            <person name="Delisi L.E."/>
            <person name="Mottron L."/>
            <person name="Joober R."/>
            <person name="Fombonne E."/>
            <person name="Drapeau P."/>
            <person name="Rouleau G.A."/>
        </authorList>
    </citation>
    <scope>VARIANTS MET-89 AND PHE-549</scope>
</reference>
<evidence type="ECO:0000250" key="1">
    <source>
        <dbReference type="UniProtKB" id="Q810C0"/>
    </source>
</evidence>
<evidence type="ECO:0000255" key="2"/>
<evidence type="ECO:0000256" key="3">
    <source>
        <dbReference type="SAM" id="MobiDB-lite"/>
    </source>
</evidence>
<evidence type="ECO:0000269" key="4">
    <source>
    </source>
</evidence>
<evidence type="ECO:0000269" key="5">
    <source>
    </source>
</evidence>
<evidence type="ECO:0000269" key="6">
    <source>
    </source>
</evidence>
<evidence type="ECO:0000269" key="7">
    <source>
    </source>
</evidence>
<evidence type="ECO:0000269" key="8">
    <source>
    </source>
</evidence>
<evidence type="ECO:0000303" key="9">
    <source>
    </source>
</evidence>
<evidence type="ECO:0000305" key="10"/>
<evidence type="ECO:0000312" key="11">
    <source>
        <dbReference type="EMBL" id="BAB47483.1"/>
    </source>
</evidence>
<evidence type="ECO:0000312" key="12">
    <source>
        <dbReference type="EMBL" id="BAC03566.1"/>
    </source>
</evidence>
<evidence type="ECO:0000312" key="13">
    <source>
        <dbReference type="EMBL" id="CAC18888.1"/>
    </source>
</evidence>
<feature type="signal peptide" evidence="2">
    <location>
        <begin position="1"/>
        <end position="21"/>
    </location>
</feature>
<feature type="chain" id="PRO_0000032675" description="SLIT and NTRK-like protein 2" evidence="2">
    <location>
        <begin position="22"/>
        <end position="845"/>
    </location>
</feature>
<feature type="topological domain" description="Extracellular" evidence="2">
    <location>
        <begin position="22"/>
        <end position="621"/>
    </location>
</feature>
<feature type="transmembrane region" description="Helical" evidence="2">
    <location>
        <begin position="622"/>
        <end position="642"/>
    </location>
</feature>
<feature type="topological domain" description="Cytoplasmic" evidence="2">
    <location>
        <begin position="643"/>
        <end position="845"/>
    </location>
</feature>
<feature type="repeat" description="LRR 1">
    <location>
        <begin position="63"/>
        <end position="84"/>
    </location>
</feature>
<feature type="repeat" description="LRR 2">
    <location>
        <begin position="87"/>
        <end position="108"/>
    </location>
</feature>
<feature type="repeat" description="LRR 3">
    <location>
        <begin position="111"/>
        <end position="132"/>
    </location>
</feature>
<feature type="repeat" description="LRR 4">
    <location>
        <begin position="135"/>
        <end position="156"/>
    </location>
</feature>
<feature type="repeat" description="LRR 5">
    <location>
        <begin position="159"/>
        <end position="180"/>
    </location>
</feature>
<feature type="repeat" description="LRR 6">
    <location>
        <begin position="182"/>
        <end position="203"/>
    </location>
</feature>
<feature type="domain" description="LRRCT 1">
    <location>
        <begin position="216"/>
        <end position="265"/>
    </location>
</feature>
<feature type="domain" description="LRRNT">
    <location>
        <begin position="331"/>
        <end position="373"/>
    </location>
</feature>
<feature type="repeat" description="LRR 7">
    <location>
        <begin position="376"/>
        <end position="397"/>
    </location>
</feature>
<feature type="repeat" description="LRR 8">
    <location>
        <begin position="400"/>
        <end position="421"/>
    </location>
</feature>
<feature type="repeat" description="LRR 9">
    <location>
        <begin position="424"/>
        <end position="445"/>
    </location>
</feature>
<feature type="repeat" description="LRR 10">
    <location>
        <begin position="448"/>
        <end position="469"/>
    </location>
</feature>
<feature type="repeat" description="LRR 11">
    <location>
        <begin position="472"/>
        <end position="493"/>
    </location>
</feature>
<feature type="repeat" description="LRR 12">
    <location>
        <begin position="495"/>
        <end position="516"/>
    </location>
</feature>
<feature type="domain" description="LRRCT 2">
    <location>
        <begin position="529"/>
        <end position="580"/>
    </location>
</feature>
<feature type="region of interest" description="Required for interaction with PTPRD" evidence="1">
    <location>
        <begin position="167"/>
        <end position="215"/>
    </location>
</feature>
<feature type="region of interest" description="Disordered" evidence="3">
    <location>
        <begin position="263"/>
        <end position="321"/>
    </location>
</feature>
<feature type="compositionally biased region" description="Polar residues" evidence="3">
    <location>
        <begin position="283"/>
        <end position="293"/>
    </location>
</feature>
<feature type="modified residue" description="Phosphotyrosine" evidence="1">
    <location>
        <position position="756"/>
    </location>
</feature>
<feature type="glycosylation site" description="N-linked (GlcNAc...) asparagine" evidence="2">
    <location>
        <position position="84"/>
    </location>
</feature>
<feature type="glycosylation site" description="N-linked (GlcNAc...) asparagine" evidence="2">
    <location>
        <position position="421"/>
    </location>
</feature>
<feature type="disulfide bond" evidence="1">
    <location>
        <begin position="29"/>
        <end position="35"/>
    </location>
</feature>
<feature type="disulfide bond" evidence="1">
    <location>
        <begin position="33"/>
        <end position="46"/>
    </location>
</feature>
<feature type="disulfide bond" evidence="1">
    <location>
        <begin position="220"/>
        <end position="243"/>
    </location>
</feature>
<feature type="disulfide bond" evidence="1">
    <location>
        <begin position="222"/>
        <end position="263"/>
    </location>
</feature>
<feature type="splice variant" id="VSP_050706" description="In isoform 2." evidence="9">
    <original>SYSNLEEKKEEPATP</original>
    <variation>KTSLENIWRPCLHKK</variation>
    <location>
        <begin position="719"/>
        <end position="733"/>
    </location>
</feature>
<feature type="splice variant" id="VSP_050707" description="In isoform 2." evidence="9">
    <location>
        <begin position="734"/>
        <end position="845"/>
    </location>
</feature>
<feature type="sequence variant" id="VAR_088525" description="Found in a patient with a neurodevelopmental disorder; uncertain significance; does not affect surface expression; does not affect function in synaptogenesis." evidence="8">
    <original>S</original>
    <variation>I</variation>
    <location>
        <position position="9"/>
    </location>
</feature>
<feature type="sequence variant" id="VAR_088526" description="Found in a patient with a neurodevelopmental disorder; uncertain significance; does not affect surface expression; does not affect function in synaptogenesis." evidence="8">
    <original>G</original>
    <variation>E</variation>
    <location>
        <position position="15"/>
    </location>
</feature>
<feature type="sequence variant" id="VAR_088527" description="In XLID111; likely pathogenic; severely decreased surface expression; severely decreased localization to dendrites; loss-of-function variant unable to rescue defects of excitatory synapse development and synaptic transmission when expressed in SLITRK2 knockout-out mouse hippocampal neurons; no effect on interaction with NTRK2." evidence="8">
    <original>L</original>
    <variation>S</variation>
    <location>
        <position position="74"/>
    </location>
</feature>
<feature type="sequence variant" id="VAR_077630" description="Found in a patient with schizophrenia; uncertain significance; does not impair synaptogenesis; no effect on localization to cell membrane; dbSNP:rs1402893590." evidence="5 7">
    <original>V</original>
    <variation>M</variation>
    <location>
        <position position="89"/>
    </location>
</feature>
<feature type="sequence variant" id="VAR_088528" description="Found in a patient with a neurodevelopmental disorder; benign; does not affect surface expression; does not affect localization to dendrites; does not affect function in synaptogenesis." evidence="8">
    <original>V</original>
    <variation>I</variation>
    <location>
        <position position="201"/>
    </location>
</feature>
<feature type="sequence variant" id="VAR_088529" description="In XLID111; uncertain significance; does not affect surface expression; does not affect localization to dendrites; does not affect function in synaptogenesis; able to rescue defects of excitatory synapse development and synaptic transmission when expressed in SLITRK2 knockout-out mouse hippocampal neurons." evidence="8">
    <original>E</original>
    <variation>K</variation>
    <location>
        <position position="210"/>
    </location>
</feature>
<feature type="sequence variant" id="VAR_088530" description="Found in a patient with a neurodevelopmental disorder; uncertain significance; does not affect surface expression; does not affect localization to dendrites; does not affect function in synaptogenesis; able to rescue defects of excitatory synapse development and synaptic transmission when expressed in SLITRK2 knockout-out mouse hippocampal neurons." evidence="8">
    <original>P</original>
    <variation>A</variation>
    <location>
        <position position="311"/>
    </location>
</feature>
<feature type="sequence variant" id="VAR_088531" description="In XLID111; likely pathogenic; does not affect surface expression; does not affect localization to dendrites; loss-of-function variant unable to rescue defects of excitatory synapse development and synaptic transmission when expressed in SLITRK2 knockout-out mouse hippocampal neurons; no effect on interaction with NTRK2." evidence="8">
    <original>T</original>
    <variation>A</variation>
    <location>
        <position position="312"/>
    </location>
</feature>
<feature type="sequence variant" id="VAR_088532" description="Does not affect surface expression; does not affect localization to dendrites; does not affect function in synaptogenesis; able to rescue defects of excitatory synapse development and synaptic transmission when expressed in SLITRK2 knockout-out mouse hippocampal neurons; dbSNP:rs150059944." evidence="8">
    <original>S</original>
    <variation>N</variation>
    <location>
        <position position="323"/>
    </location>
</feature>
<feature type="sequence variant" id="VAR_088533" description="In XLID111; likely pathogenic; severely decreased surface expression; severely decreased localization to dendrites; loss-of-function variant unable to rescue defects of excitatory synapse development and synaptic transmission when expressed in SLITRK2 knockout-out mouse hippocampal neurons; no effect on interaction with NTRK2." evidence="8">
    <original>P</original>
    <variation>R</variation>
    <location>
        <position position="374"/>
    </location>
</feature>
<feature type="sequence variant" id="VAR_088534" description="In XLID111; likely pathogenic; decreased surface expression; decreased localization to dendrites; loss-of-function variant unable to rescue defects of excitatory synapse development and synaptic transmission when expressed in SLITRK2 knockout-out mouse hippocampal neurons; no effect on interaction with NTRK2." evidence="8">
    <original>R</original>
    <variation>C</variation>
    <location>
        <position position="426"/>
    </location>
</feature>
<feature type="sequence variant" id="VAR_088535" description="In XLID111; likely pathogenic; severely decreased surface expression; severely decreased localization to dendrites; loss-of-function variant unable to rescue defects of excitatory synapse development and synaptic transmission when expressed in SLITRK2 knockout-out mouse hippocampal neurons; no effect on interaction with NTRK2." evidence="8">
    <location>
        <begin position="461"/>
        <end position="845"/>
    </location>
</feature>
<feature type="sequence variant" id="VAR_088536" description="Found in a patient with neurodevelopmental disorder; uncertain significance; does not affect surface expression; does not affect localization to dendrites; does not affect function in synaptogenesis; able to rescue defects of excitatory synapse development and synaptic transmission when expressed in SLITRK2 knockout-out mouse hippocampal neurons." evidence="8">
    <original>R</original>
    <variation>Q</variation>
    <location>
        <position position="484"/>
    </location>
</feature>
<feature type="sequence variant" id="VAR_088537" description="In XLID111; uncertain significance; does not affect surface expression; does not affect localization to dendrites; does not affect function in synaptogenesis; able to rescue defects of excitatory synapse development and synaptic transmission when expressed in SLITRK2 knockout-out mouse hippocampal neurons." evidence="8">
    <original>V</original>
    <variation>M</variation>
    <location>
        <position position="511"/>
    </location>
</feature>
<feature type="sequence variant" id="VAR_077631" description="Found in a patient with schizophrenia; uncertain significance; does not impair synaptogenesis; no effect on localization to cell membrane; dbSNP:rs1239180055." evidence="5 7">
    <original>S</original>
    <variation>F</variation>
    <location>
        <position position="549"/>
    </location>
</feature>
<feature type="sequence variant" id="VAR_088538" description="Found in a patient with a neurodevelopmental disorder; uncertain significance; does not affect surface expression; does not affect localization to dendrites; does not affect function in synaptogenesis; able to rescue defects of excitatory synapse development and synaptic transmission when expressed in SLITRK2 knockout-out mouse hippocampal neurons." evidence="8">
    <original>E</original>
    <variation>D</variation>
    <location>
        <position position="555"/>
    </location>
</feature>
<feature type="sequence variant" id="VAR_088539" description="Does not affect surface expression; does not affect localization to dendrites; does not affect function in synaptogenesis; able to rescue defects of excitatory synapse development and synaptic transmission when expressed in SLITRK2 knockout-out mouse hippocampal neurons; dbSNP:rs368512221." evidence="8">
    <original>V</original>
    <variation>I</variation>
    <location>
        <position position="589"/>
    </location>
</feature>
<feature type="sequence variant" id="VAR_027756" description="Does not affect synaptogenesis; no effect on localization to cell membrane; dbSNP:rs2295336." evidence="7">
    <original>S</original>
    <variation>P</variation>
    <location>
        <position position="601"/>
    </location>
</feature>
<feature type="sequence variant" id="VAR_088540" description="Found in a patient with a neurodevelopmental disorder; uncertain significance; does not affect surface expression; does not affect localization to dendrites; does not affect function in synaptogenesis; able to rescue defects of excitatory synapse development and synaptic transmission when expressed in SLITRK2 knockout-out mouse hippocampal neurons." evidence="8">
    <original>R</original>
    <variation>C</variation>
    <location>
        <position position="792"/>
    </location>
</feature>
<feature type="sequence conflict" description="In Ref. 3; BAC03566." evidence="10" ref="3">
    <original>S</original>
    <variation>G</variation>
    <location>
        <position position="721"/>
    </location>
</feature>
<name>SLIK2_HUMAN</name>
<comment type="function">
    <text evidence="1 6 7 8">It is involved in synaptogenesis and promotes excitatory synapse differentiation (PubMed:27273464, PubMed:27812321, PubMed:35840571). Suppresses neurite outgrowth (By similarity). Involved in the negative regulation of NTRK2 (PubMed:35840571).</text>
</comment>
<comment type="subunit">
    <text evidence="1 8">Interacts with PTPRD; this interaction is PTPRD splicing-dependent and may induce pre-synaptic differentiation. Interacts with NTRK2 (PubMed:35840571).</text>
</comment>
<comment type="subcellular location">
    <subcellularLocation>
        <location evidence="10">Membrane</location>
        <topology evidence="10">Single-pass type I membrane protein</topology>
    </subcellularLocation>
    <subcellularLocation>
        <location evidence="7 8">Cell membrane</location>
    </subcellularLocation>
    <subcellularLocation>
        <location evidence="8">Cell projection</location>
        <location evidence="8">Dendrite</location>
    </subcellularLocation>
</comment>
<comment type="alternative products">
    <event type="alternative splicing"/>
    <isoform>
        <id>Q9H156-1</id>
        <name evidence="10">1</name>
        <sequence type="displayed"/>
    </isoform>
    <isoform>
        <id>Q9H156-2</id>
        <name evidence="10">2</name>
        <sequence type="described" ref="VSP_050706 VSP_050707"/>
    </isoform>
</comment>
<comment type="tissue specificity">
    <text evidence="4">Expressed predominantly in the cerebral cortex of the brain but also at low levels in the spinal cord and medulla. Also expressed in some astrocytic brain tumors such as astrocytomas, oligodendrogliomas, glioblastomas, gangliogliomas and primitive neuroectodermal tumors.</text>
</comment>
<comment type="disease" evidence="8">
    <disease id="DI-06670">
        <name>Intellectual developmental disorder, X-linked 111</name>
        <acronym>XLID111</acronym>
        <description>A neurodevelopmental disorder characterized by moderate to severe intellectual disability, delayed development, speech delay, and neuropsychiatric and behavioral problems such as anxiety, attention deficit-hyperactivity disorder and autism spectrum disorder.</description>
        <dbReference type="MIM" id="301107"/>
    </disease>
    <text>The disease is caused by variants affecting the gene represented in this entry.</text>
</comment>
<comment type="similarity">
    <text evidence="10">Belongs to the SLITRK family.</text>
</comment>
<comment type="sequence caution" evidence="10">
    <conflict type="erroneous initiation">
        <sequence resource="EMBL-CDS" id="BAB47483"/>
    </conflict>
    <text>Extended N-terminus.</text>
</comment>
<gene>
    <name type="primary">SLITRK2</name>
    <name type="synonym">CXorf2</name>
    <name type="synonym">KIAA1854</name>
    <name type="synonym">SLITL1</name>
    <name type="ORF">UNQ9197/PRO34756</name>
</gene>